<reference key="1">
    <citation type="journal article" date="2006" name="Proc. Natl. Acad. Sci. U.S.A.">
        <title>Genomic analysis of the uncultivated marine crenarchaeote Cenarchaeum symbiosum.</title>
        <authorList>
            <person name="Hallam S.J."/>
            <person name="Konstantinidis K.T."/>
            <person name="Putnam N."/>
            <person name="Schleper C."/>
            <person name="Watanabe Y."/>
            <person name="Sugahara J."/>
            <person name="Preston C."/>
            <person name="de la Torre J."/>
            <person name="Richardson P.M."/>
            <person name="DeLong E.F."/>
        </authorList>
    </citation>
    <scope>NUCLEOTIDE SEQUENCE [LARGE SCALE GENOMIC DNA]</scope>
    <source>
        <strain>A</strain>
    </source>
</reference>
<evidence type="ECO:0000255" key="1">
    <source>
        <dbReference type="HAMAP-Rule" id="MF_00310"/>
    </source>
</evidence>
<proteinExistence type="inferred from homology"/>
<name>AATB_CENSY</name>
<feature type="chain" id="PRO_0000322499" description="A-type ATP synthase subunit B">
    <location>
        <begin position="1"/>
        <end position="462"/>
    </location>
</feature>
<gene>
    <name evidence="1" type="primary">atpB</name>
    <name type="ordered locus">CENSYa_1445</name>
</gene>
<comment type="function">
    <text evidence="1">Component of the A-type ATP synthase that produces ATP from ADP in the presence of a proton gradient across the membrane. The B chain is a regulatory subunit.</text>
</comment>
<comment type="subunit">
    <text evidence="1">Has multiple subunits with at least A(3), B(3), C, D, E, F, H, I and proteolipid K(x).</text>
</comment>
<comment type="subcellular location">
    <subcellularLocation>
        <location evidence="1">Cell membrane</location>
        <topology evidence="1">Peripheral membrane protein</topology>
    </subcellularLocation>
</comment>
<comment type="similarity">
    <text evidence="1">Belongs to the ATPase alpha/beta chains family.</text>
</comment>
<accession>A0RXK0</accession>
<organism>
    <name type="scientific">Cenarchaeum symbiosum (strain A)</name>
    <dbReference type="NCBI Taxonomy" id="414004"/>
    <lineage>
        <taxon>Archaea</taxon>
        <taxon>Nitrososphaerota</taxon>
        <taxon>Candidatus Cenarchaeales</taxon>
        <taxon>Candidatus Cenarchaeaceae</taxon>
        <taxon>Candidatus Cenarchaeum</taxon>
    </lineage>
</organism>
<keyword id="KW-0066">ATP synthesis</keyword>
<keyword id="KW-1003">Cell membrane</keyword>
<keyword id="KW-0375">Hydrogen ion transport</keyword>
<keyword id="KW-0406">Ion transport</keyword>
<keyword id="KW-0472">Membrane</keyword>
<keyword id="KW-1185">Reference proteome</keyword>
<keyword id="KW-0813">Transport</keyword>
<dbReference type="EMBL" id="DP000238">
    <property type="protein sequence ID" value="ABK78067.1"/>
    <property type="molecule type" value="Genomic_DNA"/>
</dbReference>
<dbReference type="SMR" id="A0RXK0"/>
<dbReference type="STRING" id="414004.CENSYa_1445"/>
<dbReference type="EnsemblBacteria" id="ABK78067">
    <property type="protein sequence ID" value="ABK78067"/>
    <property type="gene ID" value="CENSYa_1445"/>
</dbReference>
<dbReference type="KEGG" id="csy:CENSYa_1445"/>
<dbReference type="PATRIC" id="fig|414004.10.peg.1329"/>
<dbReference type="HOGENOM" id="CLU_022916_0_0_2"/>
<dbReference type="Proteomes" id="UP000000758">
    <property type="component" value="Chromosome"/>
</dbReference>
<dbReference type="GO" id="GO:0005886">
    <property type="term" value="C:plasma membrane"/>
    <property type="evidence" value="ECO:0007669"/>
    <property type="project" value="UniProtKB-SubCell"/>
</dbReference>
<dbReference type="GO" id="GO:0005524">
    <property type="term" value="F:ATP binding"/>
    <property type="evidence" value="ECO:0007669"/>
    <property type="project" value="UniProtKB-UniRule"/>
</dbReference>
<dbReference type="GO" id="GO:0046933">
    <property type="term" value="F:proton-transporting ATP synthase activity, rotational mechanism"/>
    <property type="evidence" value="ECO:0007669"/>
    <property type="project" value="UniProtKB-UniRule"/>
</dbReference>
<dbReference type="GO" id="GO:0046961">
    <property type="term" value="F:proton-transporting ATPase activity, rotational mechanism"/>
    <property type="evidence" value="ECO:0007669"/>
    <property type="project" value="TreeGrafter"/>
</dbReference>
<dbReference type="GO" id="GO:0042777">
    <property type="term" value="P:proton motive force-driven plasma membrane ATP synthesis"/>
    <property type="evidence" value="ECO:0007669"/>
    <property type="project" value="UniProtKB-UniRule"/>
</dbReference>
<dbReference type="CDD" id="cd18112">
    <property type="entry name" value="ATP-synt_V_A-type_beta_C"/>
    <property type="match status" value="1"/>
</dbReference>
<dbReference type="CDD" id="cd18118">
    <property type="entry name" value="ATP-synt_V_A-type_beta_N"/>
    <property type="match status" value="1"/>
</dbReference>
<dbReference type="CDD" id="cd01135">
    <property type="entry name" value="V_A-ATPase_B"/>
    <property type="match status" value="1"/>
</dbReference>
<dbReference type="Gene3D" id="3.40.50.12240">
    <property type="match status" value="1"/>
</dbReference>
<dbReference type="HAMAP" id="MF_00310">
    <property type="entry name" value="ATP_synth_B_arch"/>
    <property type="match status" value="1"/>
</dbReference>
<dbReference type="InterPro" id="IPR055190">
    <property type="entry name" value="ATP-synt_VA_C"/>
</dbReference>
<dbReference type="InterPro" id="IPR020003">
    <property type="entry name" value="ATPase_a/bsu_AS"/>
</dbReference>
<dbReference type="InterPro" id="IPR004100">
    <property type="entry name" value="ATPase_F1/V1/A1_a/bsu_N"/>
</dbReference>
<dbReference type="InterPro" id="IPR036121">
    <property type="entry name" value="ATPase_F1/V1/A1_a/bsu_N_sf"/>
</dbReference>
<dbReference type="InterPro" id="IPR000194">
    <property type="entry name" value="ATPase_F1/V1/A1_a/bsu_nucl-bd"/>
</dbReference>
<dbReference type="InterPro" id="IPR027417">
    <property type="entry name" value="P-loop_NTPase"/>
</dbReference>
<dbReference type="InterPro" id="IPR022879">
    <property type="entry name" value="V-ATPase_su_B/beta"/>
</dbReference>
<dbReference type="NCBIfam" id="NF003235">
    <property type="entry name" value="PRK04196.1"/>
    <property type="match status" value="1"/>
</dbReference>
<dbReference type="PANTHER" id="PTHR43389">
    <property type="entry name" value="V-TYPE PROTON ATPASE SUBUNIT B"/>
    <property type="match status" value="1"/>
</dbReference>
<dbReference type="PANTHER" id="PTHR43389:SF4">
    <property type="entry name" value="V-TYPE PROTON ATPASE SUBUNIT B"/>
    <property type="match status" value="1"/>
</dbReference>
<dbReference type="Pfam" id="PF00006">
    <property type="entry name" value="ATP-synt_ab"/>
    <property type="match status" value="1"/>
</dbReference>
<dbReference type="Pfam" id="PF02874">
    <property type="entry name" value="ATP-synt_ab_N"/>
    <property type="match status" value="1"/>
</dbReference>
<dbReference type="Pfam" id="PF22919">
    <property type="entry name" value="ATP-synt_VA_C"/>
    <property type="match status" value="1"/>
</dbReference>
<dbReference type="PIRSF" id="PIRSF039114">
    <property type="entry name" value="V-ATPsynth_beta/V-ATPase_B"/>
    <property type="match status" value="1"/>
</dbReference>
<dbReference type="SUPFAM" id="SSF50615">
    <property type="entry name" value="N-terminal domain of alpha and beta subunits of F1 ATP synthase"/>
    <property type="match status" value="1"/>
</dbReference>
<dbReference type="SUPFAM" id="SSF52540">
    <property type="entry name" value="P-loop containing nucleoside triphosphate hydrolases"/>
    <property type="match status" value="1"/>
</dbReference>
<dbReference type="PROSITE" id="PS00152">
    <property type="entry name" value="ATPASE_ALPHA_BETA"/>
    <property type="match status" value="1"/>
</dbReference>
<sequence length="462" mass="50587">MTVEGGVQYSRIAEIKGPLVIVDGVENAAFDELVEIETNEGGRRLGKVLEIGNGKAIVQVFEGTTGLSVAGTNARFVGKVMEMPVSREVLGRIFDGLGRPKDKLPDPIADKFIDINGEAMNPEQREYPKDFIQTGVSAIDGIMTLVRGQKLPIFSGSGMSHNILAAQIARQASVVGTGDDFAVVFAAIGVQYSEAEYFRRSLEESGALKRSVLFLNLANDPAIERIITPRVALTVAEYLAFDLGMHVLVILTDMTNYAEALREISAAREEVPGRKGYPGYLYTDLSTIYERAGRLVGRKGSVTQVPILTMPSDDITHPIPDLTGYITEGQVVLGRDLFRQGVYPPVNILMSLSRLMKDGIGEGRTREDHQEISNQNYDAYSRAQEVRALAGIVGKAGLTDIDLRYMGVGDSLEQRLLTQATDENRTIEETLGIMWDTVSGLPKNELTKVKDKYVEKFYKGSA</sequence>
<protein>
    <recommendedName>
        <fullName evidence="1">A-type ATP synthase subunit B</fullName>
    </recommendedName>
</protein>